<name>OCT7_ARATH</name>
<sequence>MADGNTRFTVDEALVAMGFGKFQIYVLAYAGMGWVAEAMEMMLLSFVGPAVQSLWNLSARQESLITSVVFAGMLIGAYSWGIVSDKHGRRKGFIITAVVTFVAGFLSAFSPNYMWLIILRCLVGLGLGGGPVLASWYLEFIPAPSRGTWMVVFSAFWTVGTIFEASLAWLVMPRLGWRWLLAFSSVPSSLLLLFYRWTSESPRYLILQGRKAEALAILEKIARMNKTQLPPGVLSSELETELEENKNIPTENTHLLKAGESGEAVAVSKIVLKADKEPGFSLLALLSPTLMKRTLLLWVVFFGNAFAYYGVVLLTTELNNSHNRCYPTEKQLRNSNDVNYRDVFIASFAEFPGLLISAAMVDRLGRKASMASMLFTCCIFLLPLLSHQSPFITTVLLFGGRICISAAFTVVYIYAPEIYPTAVRTTGVGVGSSVGRIGGILCPLVAVGLVHGCHQTIAVLLFEVVILVSGICVCLFPFETSGRDLTDSISASKEPPSASV</sequence>
<organism>
    <name type="scientific">Arabidopsis thaliana</name>
    <name type="common">Mouse-ear cress</name>
    <dbReference type="NCBI Taxonomy" id="3702"/>
    <lineage>
        <taxon>Eukaryota</taxon>
        <taxon>Viridiplantae</taxon>
        <taxon>Streptophyta</taxon>
        <taxon>Embryophyta</taxon>
        <taxon>Tracheophyta</taxon>
        <taxon>Spermatophyta</taxon>
        <taxon>Magnoliopsida</taxon>
        <taxon>eudicotyledons</taxon>
        <taxon>Gunneridae</taxon>
        <taxon>Pentapetalae</taxon>
        <taxon>rosids</taxon>
        <taxon>malvids</taxon>
        <taxon>Brassicales</taxon>
        <taxon>Brassicaceae</taxon>
        <taxon>Camelineae</taxon>
        <taxon>Arabidopsis</taxon>
    </lineage>
</organism>
<keyword id="KW-0067">ATP-binding</keyword>
<keyword id="KW-0325">Glycoprotein</keyword>
<keyword id="KW-0406">Ion transport</keyword>
<keyword id="KW-0472">Membrane</keyword>
<keyword id="KW-0547">Nucleotide-binding</keyword>
<keyword id="KW-1185">Reference proteome</keyword>
<keyword id="KW-0812">Transmembrane</keyword>
<keyword id="KW-1133">Transmembrane helix</keyword>
<keyword id="KW-0813">Transport</keyword>
<protein>
    <recommendedName>
        <fullName>Organic cation/carnitine transporter 7</fullName>
        <shortName>AtOCT7</shortName>
    </recommendedName>
</protein>
<gene>
    <name type="primary">OCT7</name>
    <name type="synonym">7-Oct</name>
    <name type="ordered locus">At3g13050</name>
    <name type="ORF">MGH6.16</name>
</gene>
<comment type="function">
    <text evidence="1">High affinity carnitine transporter involved in the active cellular uptake of carnitine. Also transports organic cations (By similarity).</text>
</comment>
<comment type="subcellular location">
    <subcellularLocation>
        <location evidence="1">Membrane</location>
        <topology evidence="1">Multi-pass membrane protein</topology>
    </subcellularLocation>
</comment>
<comment type="tissue specificity">
    <text evidence="3">Expressed in pollen.</text>
</comment>
<comment type="similarity">
    <text evidence="4">Belongs to the major facilitator (TC 2.A.1) superfamily. Organic cation transporter (TC 2.A.1.19) family.</text>
</comment>
<comment type="sequence caution" evidence="4">
    <conflict type="erroneous gene model prediction">
        <sequence resource="EMBL-CDS" id="BAB02515"/>
    </conflict>
</comment>
<proteinExistence type="evidence at transcript level"/>
<dbReference type="EMBL" id="AB026645">
    <property type="protein sequence ID" value="BAB02515.1"/>
    <property type="status" value="ALT_SEQ"/>
    <property type="molecule type" value="Genomic_DNA"/>
</dbReference>
<dbReference type="EMBL" id="CP002686">
    <property type="protein sequence ID" value="AEE75283.1"/>
    <property type="molecule type" value="Genomic_DNA"/>
</dbReference>
<dbReference type="EMBL" id="CP002686">
    <property type="protein sequence ID" value="ANM64437.1"/>
    <property type="molecule type" value="Genomic_DNA"/>
</dbReference>
<dbReference type="EMBL" id="CP002686">
    <property type="protein sequence ID" value="ANM64438.1"/>
    <property type="molecule type" value="Genomic_DNA"/>
</dbReference>
<dbReference type="EMBL" id="CP002686">
    <property type="protein sequence ID" value="ANM64439.1"/>
    <property type="molecule type" value="Genomic_DNA"/>
</dbReference>
<dbReference type="EMBL" id="AY054262">
    <property type="protein sequence ID" value="AAL06921.1"/>
    <property type="molecule type" value="mRNA"/>
</dbReference>
<dbReference type="EMBL" id="BT004522">
    <property type="protein sequence ID" value="AAO42768.1"/>
    <property type="molecule type" value="mRNA"/>
</dbReference>
<dbReference type="SMR" id="Q940M4"/>
<dbReference type="BioGRID" id="5825">
    <property type="interactions" value="1"/>
</dbReference>
<dbReference type="FunCoup" id="Q940M4">
    <property type="interactions" value="771"/>
</dbReference>
<dbReference type="IntAct" id="Q940M4">
    <property type="interactions" value="1"/>
</dbReference>
<dbReference type="STRING" id="3702.Q940M4"/>
<dbReference type="GlyCosmos" id="Q940M4">
    <property type="glycosylation" value="2 sites, No reported glycans"/>
</dbReference>
<dbReference type="GlyGen" id="Q940M4">
    <property type="glycosylation" value="2 sites"/>
</dbReference>
<dbReference type="PaxDb" id="3702-AT3G13050.1"/>
<dbReference type="ProteomicsDB" id="250867"/>
<dbReference type="EnsemblPlants" id="AT3G13050.1">
    <property type="protein sequence ID" value="AT3G13050.1"/>
    <property type="gene ID" value="AT3G13050"/>
</dbReference>
<dbReference type="EnsemblPlants" id="AT3G13050.2">
    <property type="protein sequence ID" value="AT3G13050.2"/>
    <property type="gene ID" value="AT3G13050"/>
</dbReference>
<dbReference type="EnsemblPlants" id="AT3G13050.3">
    <property type="protein sequence ID" value="AT3G13050.3"/>
    <property type="gene ID" value="AT3G13050"/>
</dbReference>
<dbReference type="EnsemblPlants" id="AT3G13050.4">
    <property type="protein sequence ID" value="AT3G13050.4"/>
    <property type="gene ID" value="AT3G13050"/>
</dbReference>
<dbReference type="Gramene" id="AT3G13050.1">
    <property type="protein sequence ID" value="AT3G13050.1"/>
    <property type="gene ID" value="AT3G13050"/>
</dbReference>
<dbReference type="Gramene" id="AT3G13050.2">
    <property type="protein sequence ID" value="AT3G13050.2"/>
    <property type="gene ID" value="AT3G13050"/>
</dbReference>
<dbReference type="Gramene" id="AT3G13050.3">
    <property type="protein sequence ID" value="AT3G13050.3"/>
    <property type="gene ID" value="AT3G13050"/>
</dbReference>
<dbReference type="Gramene" id="AT3G13050.4">
    <property type="protein sequence ID" value="AT3G13050.4"/>
    <property type="gene ID" value="AT3G13050"/>
</dbReference>
<dbReference type="KEGG" id="ath:AT3G13050"/>
<dbReference type="Araport" id="AT3G13050"/>
<dbReference type="TAIR" id="AT3G13050">
    <property type="gene designation" value="NIAP"/>
</dbReference>
<dbReference type="eggNOG" id="KOG0253">
    <property type="taxonomic scope" value="Eukaryota"/>
</dbReference>
<dbReference type="HOGENOM" id="CLU_001265_46_0_1"/>
<dbReference type="InParanoid" id="Q940M4"/>
<dbReference type="OMA" id="LLWFIWM"/>
<dbReference type="OrthoDB" id="4139357at2759"/>
<dbReference type="PhylomeDB" id="Q940M4"/>
<dbReference type="PRO" id="PR:Q940M4"/>
<dbReference type="Proteomes" id="UP000006548">
    <property type="component" value="Chromosome 3"/>
</dbReference>
<dbReference type="ExpressionAtlas" id="Q940M4">
    <property type="expression patterns" value="baseline and differential"/>
</dbReference>
<dbReference type="GO" id="GO:0005886">
    <property type="term" value="C:plasma membrane"/>
    <property type="evidence" value="ECO:0000314"/>
    <property type="project" value="TAIR"/>
</dbReference>
<dbReference type="GO" id="GO:0005524">
    <property type="term" value="F:ATP binding"/>
    <property type="evidence" value="ECO:0007669"/>
    <property type="project" value="UniProtKB-KW"/>
</dbReference>
<dbReference type="GO" id="GO:0090417">
    <property type="term" value="F:N-methylnicotinate transmembrane transporter activity"/>
    <property type="evidence" value="ECO:0000314"/>
    <property type="project" value="TAIR"/>
</dbReference>
<dbReference type="GO" id="GO:0090416">
    <property type="term" value="F:nicotinate transmembrane transporter activity"/>
    <property type="evidence" value="ECO:0000314"/>
    <property type="project" value="TAIR"/>
</dbReference>
<dbReference type="GO" id="GO:0006811">
    <property type="term" value="P:monoatomic ion transport"/>
    <property type="evidence" value="ECO:0007669"/>
    <property type="project" value="UniProtKB-KW"/>
</dbReference>
<dbReference type="GO" id="GO:2001143">
    <property type="term" value="P:N-methylnicotinate transport"/>
    <property type="evidence" value="ECO:0000314"/>
    <property type="project" value="TAIR"/>
</dbReference>
<dbReference type="GO" id="GO:2001142">
    <property type="term" value="P:nicotinate transport"/>
    <property type="evidence" value="ECO:0000314"/>
    <property type="project" value="TAIR"/>
</dbReference>
<dbReference type="FunFam" id="1.20.1250.20:FF:000232">
    <property type="entry name" value="Organic cation/carnitine transporter 7"/>
    <property type="match status" value="1"/>
</dbReference>
<dbReference type="Gene3D" id="1.20.1250.20">
    <property type="entry name" value="MFS general substrate transporter like domains"/>
    <property type="match status" value="1"/>
</dbReference>
<dbReference type="InterPro" id="IPR020846">
    <property type="entry name" value="MFS_dom"/>
</dbReference>
<dbReference type="InterPro" id="IPR005828">
    <property type="entry name" value="MFS_sugar_transport-like"/>
</dbReference>
<dbReference type="InterPro" id="IPR036259">
    <property type="entry name" value="MFS_trans_sf"/>
</dbReference>
<dbReference type="InterPro" id="IPR005829">
    <property type="entry name" value="Sugar_transporter_CS"/>
</dbReference>
<dbReference type="PANTHER" id="PTHR23511:SF5">
    <property type="entry name" value="MAJOR FACILITATOR-TYPE TRANSPORTER HXNZ-RELATED"/>
    <property type="match status" value="1"/>
</dbReference>
<dbReference type="PANTHER" id="PTHR23511">
    <property type="entry name" value="SYNAPTIC VESICLE GLYCOPROTEIN 2"/>
    <property type="match status" value="1"/>
</dbReference>
<dbReference type="Pfam" id="PF00083">
    <property type="entry name" value="Sugar_tr"/>
    <property type="match status" value="1"/>
</dbReference>
<dbReference type="SUPFAM" id="SSF103473">
    <property type="entry name" value="MFS general substrate transporter"/>
    <property type="match status" value="1"/>
</dbReference>
<dbReference type="PROSITE" id="PS50850">
    <property type="entry name" value="MFS"/>
    <property type="match status" value="1"/>
</dbReference>
<dbReference type="PROSITE" id="PS00216">
    <property type="entry name" value="SUGAR_TRANSPORT_1"/>
    <property type="match status" value="1"/>
</dbReference>
<accession>Q940M4</accession>
<accession>Q9LSH7</accession>
<feature type="chain" id="PRO_0000415363" description="Organic cation/carnitine transporter 7">
    <location>
        <begin position="1"/>
        <end position="500"/>
    </location>
</feature>
<feature type="topological domain" description="Cytoplasmic" evidence="2">
    <location>
        <begin position="1"/>
        <end position="23"/>
    </location>
</feature>
<feature type="transmembrane region" description="Helical; Name=1" evidence="2">
    <location>
        <begin position="24"/>
        <end position="44"/>
    </location>
</feature>
<feature type="topological domain" description="Extracellular" evidence="2">
    <location>
        <begin position="45"/>
        <end position="62"/>
    </location>
</feature>
<feature type="transmembrane region" description="Helical; Name=2" evidence="2">
    <location>
        <begin position="63"/>
        <end position="83"/>
    </location>
</feature>
<feature type="topological domain" description="Cytoplasmic" evidence="2">
    <location>
        <begin position="84"/>
        <end position="97"/>
    </location>
</feature>
<feature type="transmembrane region" description="Helical; Name=3" evidence="2">
    <location>
        <begin position="98"/>
        <end position="118"/>
    </location>
</feature>
<feature type="topological domain" description="Extracellular" evidence="2">
    <location>
        <begin position="119"/>
        <end position="120"/>
    </location>
</feature>
<feature type="transmembrane region" description="Helical; Name=4" evidence="2">
    <location>
        <begin position="121"/>
        <end position="141"/>
    </location>
</feature>
<feature type="topological domain" description="Cytoplasmic" evidence="2">
    <location>
        <begin position="142"/>
        <end position="150"/>
    </location>
</feature>
<feature type="transmembrane region" description="Helical; Name=5" evidence="2">
    <location>
        <begin position="151"/>
        <end position="171"/>
    </location>
</feature>
<feature type="topological domain" description="Extracellular" evidence="2">
    <location>
        <begin position="172"/>
        <end position="174"/>
    </location>
</feature>
<feature type="transmembrane region" description="Helical; Name=6" evidence="2">
    <location>
        <begin position="175"/>
        <end position="195"/>
    </location>
</feature>
<feature type="topological domain" description="Cytoplasmic" evidence="2">
    <location>
        <begin position="196"/>
        <end position="293"/>
    </location>
</feature>
<feature type="transmembrane region" description="Helical; Name=7" evidence="2">
    <location>
        <begin position="294"/>
        <end position="314"/>
    </location>
</feature>
<feature type="topological domain" description="Extracellular" evidence="2">
    <location>
        <begin position="315"/>
        <end position="341"/>
    </location>
</feature>
<feature type="transmembrane region" description="Helical; Name=8" evidence="2">
    <location>
        <begin position="342"/>
        <end position="362"/>
    </location>
</feature>
<feature type="topological domain" description="Cytoplasmic" evidence="2">
    <location>
        <begin position="363"/>
        <end position="367"/>
    </location>
</feature>
<feature type="transmembrane region" description="Helical; Name=9" evidence="2">
    <location>
        <begin position="368"/>
        <end position="387"/>
    </location>
</feature>
<feature type="topological domain" description="Extracellular" evidence="2">
    <location>
        <begin position="388"/>
        <end position="401"/>
    </location>
</feature>
<feature type="transmembrane region" description="Helical; Name=10" evidence="2">
    <location>
        <begin position="402"/>
        <end position="422"/>
    </location>
</feature>
<feature type="topological domain" description="Cytoplasmic" evidence="2">
    <location>
        <begin position="423"/>
        <end position="429"/>
    </location>
</feature>
<feature type="transmembrane region" description="Helical; Name=11" evidence="2">
    <location>
        <begin position="430"/>
        <end position="450"/>
    </location>
</feature>
<feature type="topological domain" description="Extracellular" evidence="2">
    <location>
        <begin position="451"/>
        <end position="456"/>
    </location>
</feature>
<feature type="transmembrane region" description="Helical; Name=12" evidence="2">
    <location>
        <begin position="457"/>
        <end position="477"/>
    </location>
</feature>
<feature type="topological domain" description="Cytoplasmic" evidence="2">
    <location>
        <begin position="478"/>
        <end position="500"/>
    </location>
</feature>
<feature type="binding site" evidence="2">
    <location>
        <begin position="137"/>
        <end position="144"/>
    </location>
    <ligand>
        <name>ATP</name>
        <dbReference type="ChEBI" id="CHEBI:30616"/>
    </ligand>
</feature>
<feature type="glycosylation site" description="N-linked (GlcNAc...) asparagine" evidence="2">
    <location>
        <position position="56"/>
    </location>
</feature>
<feature type="glycosylation site" description="N-linked (GlcNAc...) asparagine" evidence="2">
    <location>
        <position position="319"/>
    </location>
</feature>
<reference key="1">
    <citation type="journal article" date="2000" name="DNA Res.">
        <title>Structural analysis of Arabidopsis thaliana chromosome 3. I. Sequence features of the regions of 4,504,864 bp covered by sixty P1 and TAC clones.</title>
        <authorList>
            <person name="Sato S."/>
            <person name="Nakamura Y."/>
            <person name="Kaneko T."/>
            <person name="Katoh T."/>
            <person name="Asamizu E."/>
            <person name="Tabata S."/>
        </authorList>
    </citation>
    <scope>NUCLEOTIDE SEQUENCE [LARGE SCALE GENOMIC DNA]</scope>
    <source>
        <strain>cv. Columbia</strain>
    </source>
</reference>
<reference key="2">
    <citation type="journal article" date="2017" name="Plant J.">
        <title>Araport11: a complete reannotation of the Arabidopsis thaliana reference genome.</title>
        <authorList>
            <person name="Cheng C.Y."/>
            <person name="Krishnakumar V."/>
            <person name="Chan A.P."/>
            <person name="Thibaud-Nissen F."/>
            <person name="Schobel S."/>
            <person name="Town C.D."/>
        </authorList>
    </citation>
    <scope>GENOME REANNOTATION</scope>
    <source>
        <strain>cv. Columbia</strain>
    </source>
</reference>
<reference key="3">
    <citation type="journal article" date="2003" name="Science">
        <title>Empirical analysis of transcriptional activity in the Arabidopsis genome.</title>
        <authorList>
            <person name="Yamada K."/>
            <person name="Lim J."/>
            <person name="Dale J.M."/>
            <person name="Chen H."/>
            <person name="Shinn P."/>
            <person name="Palm C.J."/>
            <person name="Southwick A.M."/>
            <person name="Wu H.C."/>
            <person name="Kim C.J."/>
            <person name="Nguyen M."/>
            <person name="Pham P.K."/>
            <person name="Cheuk R.F."/>
            <person name="Karlin-Newmann G."/>
            <person name="Liu S.X."/>
            <person name="Lam B."/>
            <person name="Sakano H."/>
            <person name="Wu T."/>
            <person name="Yu G."/>
            <person name="Miranda M."/>
            <person name="Quach H.L."/>
            <person name="Tripp M."/>
            <person name="Chang C.H."/>
            <person name="Lee J.M."/>
            <person name="Toriumi M.J."/>
            <person name="Chan M.M."/>
            <person name="Tang C.C."/>
            <person name="Onodera C.S."/>
            <person name="Deng J.M."/>
            <person name="Akiyama K."/>
            <person name="Ansari Y."/>
            <person name="Arakawa T."/>
            <person name="Banh J."/>
            <person name="Banno F."/>
            <person name="Bowser L."/>
            <person name="Brooks S.Y."/>
            <person name="Carninci P."/>
            <person name="Chao Q."/>
            <person name="Choy N."/>
            <person name="Enju A."/>
            <person name="Goldsmith A.D."/>
            <person name="Gurjal M."/>
            <person name="Hansen N.F."/>
            <person name="Hayashizaki Y."/>
            <person name="Johnson-Hopson C."/>
            <person name="Hsuan V.W."/>
            <person name="Iida K."/>
            <person name="Karnes M."/>
            <person name="Khan S."/>
            <person name="Koesema E."/>
            <person name="Ishida J."/>
            <person name="Jiang P.X."/>
            <person name="Jones T."/>
            <person name="Kawai J."/>
            <person name="Kamiya A."/>
            <person name="Meyers C."/>
            <person name="Nakajima M."/>
            <person name="Narusaka M."/>
            <person name="Seki M."/>
            <person name="Sakurai T."/>
            <person name="Satou M."/>
            <person name="Tamse R."/>
            <person name="Vaysberg M."/>
            <person name="Wallender E.K."/>
            <person name="Wong C."/>
            <person name="Yamamura Y."/>
            <person name="Yuan S."/>
            <person name="Shinozaki K."/>
            <person name="Davis R.W."/>
            <person name="Theologis A."/>
            <person name="Ecker J.R."/>
        </authorList>
    </citation>
    <scope>NUCLEOTIDE SEQUENCE [LARGE SCALE MRNA]</scope>
    <source>
        <strain>cv. Columbia</strain>
    </source>
</reference>
<reference key="4">
    <citation type="journal article" date="2006" name="Plant Physiol.">
        <title>Integrating membrane transport with male gametophyte development and function through transcriptomics.</title>
        <authorList>
            <person name="Bock K.W."/>
            <person name="Honys D."/>
            <person name="Ward J.M."/>
            <person name="Padmanaban S."/>
            <person name="Nawrocki E.P."/>
            <person name="Hirschi K.D."/>
            <person name="Twell D."/>
            <person name="Sze H."/>
        </authorList>
    </citation>
    <scope>TISSUE SPECIFICITY [LARGE SCALE ANALYSIS]</scope>
</reference>
<evidence type="ECO:0000250" key="1"/>
<evidence type="ECO:0000255" key="2"/>
<evidence type="ECO:0000269" key="3">
    <source>
    </source>
</evidence>
<evidence type="ECO:0000305" key="4"/>